<comment type="function">
    <text evidence="1">Catalyzes the ATP-dependent conversion of 7-carboxy-7-deazaguanine (CDG) to 7-cyano-7-deazaguanine (preQ(0)).</text>
</comment>
<comment type="catalytic activity">
    <reaction evidence="1">
        <text>7-carboxy-7-deazaguanine + NH4(+) + ATP = 7-cyano-7-deazaguanine + ADP + phosphate + H2O + H(+)</text>
        <dbReference type="Rhea" id="RHEA:27982"/>
        <dbReference type="ChEBI" id="CHEBI:15377"/>
        <dbReference type="ChEBI" id="CHEBI:15378"/>
        <dbReference type="ChEBI" id="CHEBI:28938"/>
        <dbReference type="ChEBI" id="CHEBI:30616"/>
        <dbReference type="ChEBI" id="CHEBI:43474"/>
        <dbReference type="ChEBI" id="CHEBI:45075"/>
        <dbReference type="ChEBI" id="CHEBI:61036"/>
        <dbReference type="ChEBI" id="CHEBI:456216"/>
        <dbReference type="EC" id="6.3.4.20"/>
    </reaction>
</comment>
<comment type="cofactor">
    <cofactor evidence="1">
        <name>Zn(2+)</name>
        <dbReference type="ChEBI" id="CHEBI:29105"/>
    </cofactor>
    <text evidence="1">Binds 1 zinc ion per subunit.</text>
</comment>
<comment type="pathway">
    <text evidence="1">Purine metabolism; 7-cyano-7-deazaguanine biosynthesis.</text>
</comment>
<comment type="subunit">
    <text evidence="1">Homodimer.</text>
</comment>
<comment type="similarity">
    <text evidence="1">Belongs to the QueC family.</text>
</comment>
<feature type="chain" id="PRO_0000246929" description="7-cyano-7-deazaguanine synthase">
    <location>
        <begin position="1"/>
        <end position="222"/>
    </location>
</feature>
<feature type="binding site" evidence="1">
    <location>
        <begin position="14"/>
        <end position="24"/>
    </location>
    <ligand>
        <name>ATP</name>
        <dbReference type="ChEBI" id="CHEBI:30616"/>
    </ligand>
</feature>
<feature type="binding site" evidence="1">
    <location>
        <position position="190"/>
    </location>
    <ligand>
        <name>Zn(2+)</name>
        <dbReference type="ChEBI" id="CHEBI:29105"/>
    </ligand>
</feature>
<feature type="binding site" evidence="1">
    <location>
        <position position="199"/>
    </location>
    <ligand>
        <name>Zn(2+)</name>
        <dbReference type="ChEBI" id="CHEBI:29105"/>
    </ligand>
</feature>
<feature type="binding site" evidence="1">
    <location>
        <position position="202"/>
    </location>
    <ligand>
        <name>Zn(2+)</name>
        <dbReference type="ChEBI" id="CHEBI:29105"/>
    </ligand>
</feature>
<feature type="binding site" evidence="1">
    <location>
        <position position="205"/>
    </location>
    <ligand>
        <name>Zn(2+)</name>
        <dbReference type="ChEBI" id="CHEBI:29105"/>
    </ligand>
</feature>
<protein>
    <recommendedName>
        <fullName evidence="1">7-cyano-7-deazaguanine synthase</fullName>
        <ecNumber evidence="1">6.3.4.20</ecNumber>
    </recommendedName>
    <alternativeName>
        <fullName evidence="1">7-cyano-7-carbaguanine synthase</fullName>
    </alternativeName>
    <alternativeName>
        <fullName evidence="1">PreQ(0) synthase</fullName>
    </alternativeName>
    <alternativeName>
        <fullName evidence="1">Queuosine biosynthesis protein QueC</fullName>
    </alternativeName>
</protein>
<dbReference type="EC" id="6.3.4.20" evidence="1"/>
<dbReference type="EMBL" id="CP000046">
    <property type="protein sequence ID" value="AAW37831.1"/>
    <property type="molecule type" value="Genomic_DNA"/>
</dbReference>
<dbReference type="RefSeq" id="WP_000446724.1">
    <property type="nucleotide sequence ID" value="NZ_JBGOFO010000005.1"/>
</dbReference>
<dbReference type="SMR" id="Q5HHV8"/>
<dbReference type="KEGG" id="sac:SACOL0772"/>
<dbReference type="HOGENOM" id="CLU_081854_0_0_9"/>
<dbReference type="UniPathway" id="UPA00391"/>
<dbReference type="Proteomes" id="UP000000530">
    <property type="component" value="Chromosome"/>
</dbReference>
<dbReference type="GO" id="GO:0005524">
    <property type="term" value="F:ATP binding"/>
    <property type="evidence" value="ECO:0007669"/>
    <property type="project" value="UniProtKB-UniRule"/>
</dbReference>
<dbReference type="GO" id="GO:0016879">
    <property type="term" value="F:ligase activity, forming carbon-nitrogen bonds"/>
    <property type="evidence" value="ECO:0007669"/>
    <property type="project" value="UniProtKB-UniRule"/>
</dbReference>
<dbReference type="GO" id="GO:0008270">
    <property type="term" value="F:zinc ion binding"/>
    <property type="evidence" value="ECO:0007669"/>
    <property type="project" value="UniProtKB-UniRule"/>
</dbReference>
<dbReference type="GO" id="GO:0008616">
    <property type="term" value="P:queuosine biosynthetic process"/>
    <property type="evidence" value="ECO:0007669"/>
    <property type="project" value="UniProtKB-UniRule"/>
</dbReference>
<dbReference type="CDD" id="cd01995">
    <property type="entry name" value="QueC-like"/>
    <property type="match status" value="1"/>
</dbReference>
<dbReference type="FunFam" id="3.40.50.620:FF:000017">
    <property type="entry name" value="7-cyano-7-deazaguanine synthase"/>
    <property type="match status" value="1"/>
</dbReference>
<dbReference type="Gene3D" id="3.40.50.620">
    <property type="entry name" value="HUPs"/>
    <property type="match status" value="1"/>
</dbReference>
<dbReference type="HAMAP" id="MF_01633">
    <property type="entry name" value="QueC"/>
    <property type="match status" value="1"/>
</dbReference>
<dbReference type="InterPro" id="IPR018317">
    <property type="entry name" value="QueC"/>
</dbReference>
<dbReference type="InterPro" id="IPR014729">
    <property type="entry name" value="Rossmann-like_a/b/a_fold"/>
</dbReference>
<dbReference type="NCBIfam" id="TIGR00364">
    <property type="entry name" value="7-cyano-7-deazaguanine synthase QueC"/>
    <property type="match status" value="1"/>
</dbReference>
<dbReference type="PANTHER" id="PTHR42914">
    <property type="entry name" value="7-CYANO-7-DEAZAGUANINE SYNTHASE"/>
    <property type="match status" value="1"/>
</dbReference>
<dbReference type="PANTHER" id="PTHR42914:SF1">
    <property type="entry name" value="7-CYANO-7-DEAZAGUANINE SYNTHASE"/>
    <property type="match status" value="1"/>
</dbReference>
<dbReference type="Pfam" id="PF06508">
    <property type="entry name" value="QueC"/>
    <property type="match status" value="1"/>
</dbReference>
<dbReference type="PIRSF" id="PIRSF006293">
    <property type="entry name" value="ExsB"/>
    <property type="match status" value="1"/>
</dbReference>
<dbReference type="SUPFAM" id="SSF52402">
    <property type="entry name" value="Adenine nucleotide alpha hydrolases-like"/>
    <property type="match status" value="1"/>
</dbReference>
<accession>Q5HHV8</accession>
<reference key="1">
    <citation type="journal article" date="2005" name="J. Bacteriol.">
        <title>Insights on evolution of virulence and resistance from the complete genome analysis of an early methicillin-resistant Staphylococcus aureus strain and a biofilm-producing methicillin-resistant Staphylococcus epidermidis strain.</title>
        <authorList>
            <person name="Gill S.R."/>
            <person name="Fouts D.E."/>
            <person name="Archer G.L."/>
            <person name="Mongodin E.F."/>
            <person name="DeBoy R.T."/>
            <person name="Ravel J."/>
            <person name="Paulsen I.T."/>
            <person name="Kolonay J.F."/>
            <person name="Brinkac L.M."/>
            <person name="Beanan M.J."/>
            <person name="Dodson R.J."/>
            <person name="Daugherty S.C."/>
            <person name="Madupu R."/>
            <person name="Angiuoli S.V."/>
            <person name="Durkin A.S."/>
            <person name="Haft D.H."/>
            <person name="Vamathevan J.J."/>
            <person name="Khouri H."/>
            <person name="Utterback T.R."/>
            <person name="Lee C."/>
            <person name="Dimitrov G."/>
            <person name="Jiang L."/>
            <person name="Qin H."/>
            <person name="Weidman J."/>
            <person name="Tran K."/>
            <person name="Kang K.H."/>
            <person name="Hance I.R."/>
            <person name="Nelson K.E."/>
            <person name="Fraser C.M."/>
        </authorList>
    </citation>
    <scope>NUCLEOTIDE SEQUENCE [LARGE SCALE GENOMIC DNA]</scope>
    <source>
        <strain>COL</strain>
    </source>
</reference>
<sequence>MESVLNNEKAIVVFSGGQDSTTCLFYAKKHFKEVELVTFNYGQRHDTEIEVAKQIAQDQGMKHHVLDMSLLSQLTPNALTQHDMEITNNEDGIPNTFVPARNLLFLSFAGALAYQIGAKHIITGVCETDFSGYPDCRDSFIKSMNVTLSLAMDKDFVIHTPLMWLNKAETWKLSDELEVLDYIRTKTLTCYNGIIGDGCGECPACHLRQRGLNQYLESKGAL</sequence>
<gene>
    <name evidence="1" type="primary">queC</name>
    <name type="ordered locus">SACOL0772</name>
</gene>
<organism>
    <name type="scientific">Staphylococcus aureus (strain COL)</name>
    <dbReference type="NCBI Taxonomy" id="93062"/>
    <lineage>
        <taxon>Bacteria</taxon>
        <taxon>Bacillati</taxon>
        <taxon>Bacillota</taxon>
        <taxon>Bacilli</taxon>
        <taxon>Bacillales</taxon>
        <taxon>Staphylococcaceae</taxon>
        <taxon>Staphylococcus</taxon>
    </lineage>
</organism>
<evidence type="ECO:0000255" key="1">
    <source>
        <dbReference type="HAMAP-Rule" id="MF_01633"/>
    </source>
</evidence>
<name>QUEC_STAAC</name>
<keyword id="KW-0067">ATP-binding</keyword>
<keyword id="KW-0436">Ligase</keyword>
<keyword id="KW-0479">Metal-binding</keyword>
<keyword id="KW-0547">Nucleotide-binding</keyword>
<keyword id="KW-0671">Queuosine biosynthesis</keyword>
<keyword id="KW-0862">Zinc</keyword>
<proteinExistence type="inferred from homology"/>